<keyword id="KW-0030">Aminoacyl-tRNA synthetase</keyword>
<keyword id="KW-0067">ATP-binding</keyword>
<keyword id="KW-0963">Cytoplasm</keyword>
<keyword id="KW-0436">Ligase</keyword>
<keyword id="KW-0547">Nucleotide-binding</keyword>
<keyword id="KW-0648">Protein biosynthesis</keyword>
<keyword id="KW-0694">RNA-binding</keyword>
<organism>
    <name type="scientific">Wolbachia pipientis wMel</name>
    <dbReference type="NCBI Taxonomy" id="163164"/>
    <lineage>
        <taxon>Bacteria</taxon>
        <taxon>Pseudomonadati</taxon>
        <taxon>Pseudomonadota</taxon>
        <taxon>Alphaproteobacteria</taxon>
        <taxon>Rickettsiales</taxon>
        <taxon>Anaplasmataceae</taxon>
        <taxon>Wolbachieae</taxon>
        <taxon>Wolbachia</taxon>
    </lineage>
</organism>
<comment type="function">
    <text evidence="1">Catalyzes the attachment of tyrosine to tRNA(Tyr) in a two-step reaction: tyrosine is first activated by ATP to form Tyr-AMP and then transferred to the acceptor end of tRNA(Tyr).</text>
</comment>
<comment type="catalytic activity">
    <reaction evidence="1">
        <text>tRNA(Tyr) + L-tyrosine + ATP = L-tyrosyl-tRNA(Tyr) + AMP + diphosphate + H(+)</text>
        <dbReference type="Rhea" id="RHEA:10220"/>
        <dbReference type="Rhea" id="RHEA-COMP:9706"/>
        <dbReference type="Rhea" id="RHEA-COMP:9707"/>
        <dbReference type="ChEBI" id="CHEBI:15378"/>
        <dbReference type="ChEBI" id="CHEBI:30616"/>
        <dbReference type="ChEBI" id="CHEBI:33019"/>
        <dbReference type="ChEBI" id="CHEBI:58315"/>
        <dbReference type="ChEBI" id="CHEBI:78442"/>
        <dbReference type="ChEBI" id="CHEBI:78536"/>
        <dbReference type="ChEBI" id="CHEBI:456215"/>
        <dbReference type="EC" id="6.1.1.1"/>
    </reaction>
</comment>
<comment type="subunit">
    <text evidence="1">Homodimer.</text>
</comment>
<comment type="subcellular location">
    <subcellularLocation>
        <location evidence="1">Cytoplasm</location>
    </subcellularLocation>
</comment>
<comment type="similarity">
    <text evidence="1">Belongs to the class-I aminoacyl-tRNA synthetase family. TyrS type 1 subfamily.</text>
</comment>
<proteinExistence type="inferred from homology"/>
<reference key="1">
    <citation type="journal article" date="2004" name="PLoS Biol.">
        <title>Phylogenomics of the reproductive parasite Wolbachia pipientis wMel: a streamlined genome overrun by mobile genetic elements.</title>
        <authorList>
            <person name="Wu M."/>
            <person name="Sun L.V."/>
            <person name="Vamathevan J.J."/>
            <person name="Riegler M."/>
            <person name="DeBoy R.T."/>
            <person name="Brownlie J.C."/>
            <person name="McGraw E.A."/>
            <person name="Martin W."/>
            <person name="Esser C."/>
            <person name="Ahmadinejad N."/>
            <person name="Wiegand C."/>
            <person name="Madupu R."/>
            <person name="Beanan M.J."/>
            <person name="Brinkac L.M."/>
            <person name="Daugherty S.C."/>
            <person name="Durkin A.S."/>
            <person name="Kolonay J.F."/>
            <person name="Nelson W.C."/>
            <person name="Mohamoud Y."/>
            <person name="Lee P."/>
            <person name="Berry K.J."/>
            <person name="Young M.B."/>
            <person name="Utterback T.R."/>
            <person name="Weidman J.F."/>
            <person name="Nierman W.C."/>
            <person name="Paulsen I.T."/>
            <person name="Nelson K.E."/>
            <person name="Tettelin H."/>
            <person name="O'Neill S.L."/>
            <person name="Eisen J.A."/>
        </authorList>
    </citation>
    <scope>NUCLEOTIDE SEQUENCE [LARGE SCALE GENOMIC DNA]</scope>
</reference>
<evidence type="ECO:0000255" key="1">
    <source>
        <dbReference type="HAMAP-Rule" id="MF_02006"/>
    </source>
</evidence>
<dbReference type="EC" id="6.1.1.1" evidence="1"/>
<dbReference type="EMBL" id="AE017196">
    <property type="protein sequence ID" value="AAS14768.1"/>
    <property type="molecule type" value="Genomic_DNA"/>
</dbReference>
<dbReference type="RefSeq" id="WP_007548582.1">
    <property type="nucleotide sequence ID" value="NZ_OX384529.1"/>
</dbReference>
<dbReference type="SMR" id="Q73G50"/>
<dbReference type="EnsemblBacteria" id="AAS14768">
    <property type="protein sequence ID" value="AAS14768"/>
    <property type="gene ID" value="WD_1115"/>
</dbReference>
<dbReference type="GeneID" id="70036589"/>
<dbReference type="KEGG" id="wol:WD_1115"/>
<dbReference type="eggNOG" id="COG0162">
    <property type="taxonomic scope" value="Bacteria"/>
</dbReference>
<dbReference type="Proteomes" id="UP000008215">
    <property type="component" value="Chromosome"/>
</dbReference>
<dbReference type="GO" id="GO:0005829">
    <property type="term" value="C:cytosol"/>
    <property type="evidence" value="ECO:0007669"/>
    <property type="project" value="TreeGrafter"/>
</dbReference>
<dbReference type="GO" id="GO:0005524">
    <property type="term" value="F:ATP binding"/>
    <property type="evidence" value="ECO:0007669"/>
    <property type="project" value="UniProtKB-UniRule"/>
</dbReference>
<dbReference type="GO" id="GO:0003723">
    <property type="term" value="F:RNA binding"/>
    <property type="evidence" value="ECO:0007669"/>
    <property type="project" value="UniProtKB-KW"/>
</dbReference>
<dbReference type="GO" id="GO:0004831">
    <property type="term" value="F:tyrosine-tRNA ligase activity"/>
    <property type="evidence" value="ECO:0007669"/>
    <property type="project" value="UniProtKB-UniRule"/>
</dbReference>
<dbReference type="GO" id="GO:0006437">
    <property type="term" value="P:tyrosyl-tRNA aminoacylation"/>
    <property type="evidence" value="ECO:0007669"/>
    <property type="project" value="UniProtKB-UniRule"/>
</dbReference>
<dbReference type="CDD" id="cd00165">
    <property type="entry name" value="S4"/>
    <property type="match status" value="1"/>
</dbReference>
<dbReference type="CDD" id="cd00805">
    <property type="entry name" value="TyrRS_core"/>
    <property type="match status" value="1"/>
</dbReference>
<dbReference type="FunFam" id="1.10.240.10:FF:000001">
    <property type="entry name" value="Tyrosine--tRNA ligase"/>
    <property type="match status" value="1"/>
</dbReference>
<dbReference type="Gene3D" id="3.40.50.620">
    <property type="entry name" value="HUPs"/>
    <property type="match status" value="1"/>
</dbReference>
<dbReference type="Gene3D" id="3.10.290.10">
    <property type="entry name" value="RNA-binding S4 domain"/>
    <property type="match status" value="1"/>
</dbReference>
<dbReference type="Gene3D" id="1.10.240.10">
    <property type="entry name" value="Tyrosyl-Transfer RNA Synthetase"/>
    <property type="match status" value="1"/>
</dbReference>
<dbReference type="HAMAP" id="MF_02006">
    <property type="entry name" value="Tyr_tRNA_synth_type1"/>
    <property type="match status" value="1"/>
</dbReference>
<dbReference type="InterPro" id="IPR002305">
    <property type="entry name" value="aa-tRNA-synth_Ic"/>
</dbReference>
<dbReference type="InterPro" id="IPR014729">
    <property type="entry name" value="Rossmann-like_a/b/a_fold"/>
</dbReference>
<dbReference type="InterPro" id="IPR036986">
    <property type="entry name" value="S4_RNA-bd_sf"/>
</dbReference>
<dbReference type="InterPro" id="IPR054608">
    <property type="entry name" value="SYY-like_C"/>
</dbReference>
<dbReference type="InterPro" id="IPR002307">
    <property type="entry name" value="Tyr-tRNA-ligase"/>
</dbReference>
<dbReference type="InterPro" id="IPR024088">
    <property type="entry name" value="Tyr-tRNA-ligase_bac-type"/>
</dbReference>
<dbReference type="InterPro" id="IPR024107">
    <property type="entry name" value="Tyr-tRNA-ligase_bac_1"/>
</dbReference>
<dbReference type="NCBIfam" id="TIGR00234">
    <property type="entry name" value="tyrS"/>
    <property type="match status" value="1"/>
</dbReference>
<dbReference type="PANTHER" id="PTHR11766:SF0">
    <property type="entry name" value="TYROSINE--TRNA LIGASE, MITOCHONDRIAL"/>
    <property type="match status" value="1"/>
</dbReference>
<dbReference type="PANTHER" id="PTHR11766">
    <property type="entry name" value="TYROSYL-TRNA SYNTHETASE"/>
    <property type="match status" value="1"/>
</dbReference>
<dbReference type="Pfam" id="PF22421">
    <property type="entry name" value="SYY_C-terminal"/>
    <property type="match status" value="1"/>
</dbReference>
<dbReference type="Pfam" id="PF00579">
    <property type="entry name" value="tRNA-synt_1b"/>
    <property type="match status" value="1"/>
</dbReference>
<dbReference type="PRINTS" id="PR01040">
    <property type="entry name" value="TRNASYNTHTYR"/>
</dbReference>
<dbReference type="SUPFAM" id="SSF55174">
    <property type="entry name" value="Alpha-L RNA-binding motif"/>
    <property type="match status" value="1"/>
</dbReference>
<dbReference type="SUPFAM" id="SSF52374">
    <property type="entry name" value="Nucleotidylyl transferase"/>
    <property type="match status" value="1"/>
</dbReference>
<dbReference type="PROSITE" id="PS50889">
    <property type="entry name" value="S4"/>
    <property type="match status" value="1"/>
</dbReference>
<gene>
    <name evidence="1" type="primary">tyrS</name>
    <name type="ordered locus">WD_1115</name>
</gene>
<protein>
    <recommendedName>
        <fullName evidence="1">Tyrosine--tRNA ligase</fullName>
        <ecNumber evidence="1">6.1.1.1</ecNumber>
    </recommendedName>
    <alternativeName>
        <fullName evidence="1">Tyrosyl-tRNA synthetase</fullName>
        <shortName evidence="1">TyrRS</shortName>
    </alternativeName>
</protein>
<name>SYY_WOLPM</name>
<sequence>MKHASEFLNFIQERGYLYQCTNIEGLDQLLLQSNYIVAYIGFDCTAPSLHAGHLIQIMMLCHLQKFGYKPIVLLGGGTTKIGDPSFKDKARSILPVENINQNTSSIRRILEKMVSFNDSKTGAMIVNNADWLDNIKYIDFLRDIGAYFSVNRMLSFDSVKTRLDREQTLSFLEFNYMLLQAYDFIELNKKYDCRLQIGGSDQWGNIVNGIELGKKLNLPELFGLTMPLLLNAQGKKMGKTESGAVWLDDNMLKPYDYWQYFRNVDDQDVGRFLRLLTDVPIDEIRKLESLKDQEINEAKKVLATEVTKICHGDKEAELAQFAAISAFENEDSSLLPDYIIKKEQVASGISLVDLLHDTGFEPSKGAAKRLIQGNGCKINDNVVNNIDHVINFESFKDQPFIKLSAGKKRHIKVVVD</sequence>
<accession>Q73G50</accession>
<feature type="chain" id="PRO_0000234814" description="Tyrosine--tRNA ligase">
    <location>
        <begin position="1"/>
        <end position="416"/>
    </location>
</feature>
<feature type="domain" description="S4 RNA-binding" evidence="1">
    <location>
        <begin position="349"/>
        <end position="414"/>
    </location>
</feature>
<feature type="short sequence motif" description="'HIGH' region">
    <location>
        <begin position="44"/>
        <end position="53"/>
    </location>
</feature>
<feature type="short sequence motif" description="'KMSKS' region">
    <location>
        <begin position="236"/>
        <end position="240"/>
    </location>
</feature>
<feature type="binding site" evidence="1">
    <location>
        <position position="39"/>
    </location>
    <ligand>
        <name>L-tyrosine</name>
        <dbReference type="ChEBI" id="CHEBI:58315"/>
    </ligand>
</feature>
<feature type="binding site" evidence="1">
    <location>
        <position position="176"/>
    </location>
    <ligand>
        <name>L-tyrosine</name>
        <dbReference type="ChEBI" id="CHEBI:58315"/>
    </ligand>
</feature>
<feature type="binding site" evidence="1">
    <location>
        <position position="180"/>
    </location>
    <ligand>
        <name>L-tyrosine</name>
        <dbReference type="ChEBI" id="CHEBI:58315"/>
    </ligand>
</feature>
<feature type="binding site" evidence="1">
    <location>
        <position position="239"/>
    </location>
    <ligand>
        <name>ATP</name>
        <dbReference type="ChEBI" id="CHEBI:30616"/>
    </ligand>
</feature>